<accession>P35131</accession>
<accession>Q3E8J2</accession>
<accession>Q3E8J3</accession>
<accession>Q42308</accession>
<accession>Q43276</accession>
<accession>Q4TZ02</accession>
<accession>Q8LE19</accession>
<keyword id="KW-0002">3D-structure</keyword>
<keyword id="KW-0025">Alternative splicing</keyword>
<keyword id="KW-0067">ATP-binding</keyword>
<keyword id="KW-0547">Nucleotide-binding</keyword>
<keyword id="KW-1185">Reference proteome</keyword>
<keyword id="KW-0808">Transferase</keyword>
<keyword id="KW-0833">Ubl conjugation pathway</keyword>
<sequence>MASKRILKELKDLQKDPPTSCSAGPVAEDMFHWQATIMGPAESPYSGGVFLVTIHFPPDYPFKPPKVAFRTKVFHPNINSNGSICLDILKEQWSPALTISKVLLSICSLLTDPNPDDPLVPEIAHMYKTDRAKYEATARNWTQKYAMG</sequence>
<protein>
    <recommendedName>
        <fullName>Ubiquitin-conjugating enzyme E2 8</fullName>
        <ecNumber>2.3.2.23</ecNumber>
    </recommendedName>
    <alternativeName>
        <fullName>E2 ubiquitin-conjugating enzyme 8</fullName>
    </alternativeName>
    <alternativeName>
        <fullName>UBCAT4A</fullName>
    </alternativeName>
    <alternativeName>
        <fullName>Ubiquitin carrier protein 8</fullName>
    </alternativeName>
    <alternativeName>
        <fullName>Ubiquitin-conjugating enzyme E2-17 kDa 8</fullName>
    </alternativeName>
    <alternativeName>
        <fullName>Ubiquitin-protein ligase 8</fullName>
    </alternativeName>
</protein>
<comment type="function">
    <text evidence="4">Accepts the ubiquitin from the E1 complex and catalyzes its covalent attachment to other proteins. Mediates the selective degradation of short-lived and abnormal proteins.</text>
</comment>
<comment type="catalytic activity">
    <reaction evidence="1 2">
        <text>S-ubiquitinyl-[E1 ubiquitin-activating enzyme]-L-cysteine + [E2 ubiquitin-conjugating enzyme]-L-cysteine = [E1 ubiquitin-activating enzyme]-L-cysteine + S-ubiquitinyl-[E2 ubiquitin-conjugating enzyme]-L-cysteine.</text>
        <dbReference type="EC" id="2.3.2.23"/>
    </reaction>
</comment>
<comment type="pathway">
    <text evidence="1">Protein modification; protein ubiquitination.</text>
</comment>
<comment type="subunit">
    <text evidence="3 5 6 7">Interacts with CIP8, CHIP, NLA and XERICO.</text>
</comment>
<comment type="alternative products">
    <event type="alternative splicing"/>
    <isoform>
        <id>P35131-1</id>
        <name>1</name>
        <sequence type="displayed"/>
    </isoform>
    <isoform>
        <id>P35131-2</id>
        <name>2</name>
        <sequence type="described" ref="VSP_034925"/>
    </isoform>
    <isoform>
        <id>P35131-3</id>
        <name>3</name>
        <sequence type="described" ref="VSP_034926"/>
    </isoform>
</comment>
<comment type="tissue specificity">
    <text evidence="4">Highest expression in young stems, old leaves. Lowest levels in floral buds, anthers and young leaves.</text>
</comment>
<comment type="developmental stage">
    <text evidence="8">Up-regulated during senescence, but not during the G0 to S phase transition.</text>
</comment>
<comment type="induction">
    <text evidence="8">Not induced by heat shock or wounding.</text>
</comment>
<comment type="similarity">
    <text evidence="1">Belongs to the ubiquitin-conjugating enzyme family.</text>
</comment>
<feature type="chain" id="PRO_0000082576" description="Ubiquitin-conjugating enzyme E2 8">
    <location>
        <begin position="1"/>
        <end position="148"/>
    </location>
</feature>
<feature type="domain" description="UBC core" evidence="1">
    <location>
        <begin position="1"/>
        <end position="147"/>
    </location>
</feature>
<feature type="active site" description="Glycyl thioester intermediate" evidence="1 2">
    <location>
        <position position="85"/>
    </location>
</feature>
<feature type="splice variant" id="VSP_034925" description="In isoform 2." evidence="9">
    <original>CS</original>
    <variation>CIF</variation>
    <location>
        <begin position="21"/>
        <end position="22"/>
    </location>
</feature>
<feature type="splice variant" id="VSP_034926" description="In isoform 3." evidence="9">
    <original>LLSICSLLTDPNPDDPLVPEIAHMYKTDRAKYEATARNWTQKYAMG</original>
    <variation>TLIFQKHRFSNVRLCSKSIARASTFSARILLNAQALLLECLCM</variation>
    <location>
        <begin position="103"/>
        <end position="148"/>
    </location>
</feature>
<feature type="sequence conflict" description="In Ref. 5; AAL34248." evidence="9" ref="5">
    <original>K</original>
    <variation>M</variation>
    <location>
        <position position="72"/>
    </location>
</feature>
<feature type="sequence conflict" description="In Ref. 5; AAK44072/AAL66929/AAL15262/AAK96786/AAG40361." evidence="9" ref="5">
    <original>S</original>
    <variation>D</variation>
    <location>
        <position position="80"/>
    </location>
</feature>
<feature type="sequence conflict" description="In Ref. 5; AAK44072/AAL66929/AAL15262/AAK96786/AAG40361." evidence="9" ref="5">
    <original>T</original>
    <variation>P</variation>
    <location>
        <position position="98"/>
    </location>
</feature>
<feature type="sequence conflict" description="In Ref. 6; AAM62889." evidence="9" ref="6">
    <original>E</original>
    <variation>K</variation>
    <location>
        <position position="135"/>
    </location>
</feature>
<feature type="helix" evidence="10">
    <location>
        <begin position="1"/>
        <end position="15"/>
    </location>
</feature>
<feature type="strand" evidence="10">
    <location>
        <begin position="21"/>
        <end position="28"/>
    </location>
</feature>
<feature type="strand" evidence="10">
    <location>
        <begin position="32"/>
        <end position="38"/>
    </location>
</feature>
<feature type="turn" evidence="10">
    <location>
        <begin position="44"/>
        <end position="47"/>
    </location>
</feature>
<feature type="strand" evidence="10">
    <location>
        <begin position="49"/>
        <end position="55"/>
    </location>
</feature>
<feature type="turn" evidence="10">
    <location>
        <begin position="58"/>
        <end position="61"/>
    </location>
</feature>
<feature type="strand" evidence="10">
    <location>
        <begin position="66"/>
        <end position="69"/>
    </location>
</feature>
<feature type="helix" evidence="10">
    <location>
        <begin position="87"/>
        <end position="89"/>
    </location>
</feature>
<feature type="turn" evidence="10">
    <location>
        <begin position="90"/>
        <end position="92"/>
    </location>
</feature>
<feature type="helix" evidence="10">
    <location>
        <begin position="99"/>
        <end position="111"/>
    </location>
</feature>
<feature type="helix" evidence="10">
    <location>
        <begin position="121"/>
        <end position="129"/>
    </location>
</feature>
<feature type="helix" evidence="10">
    <location>
        <begin position="131"/>
        <end position="145"/>
    </location>
</feature>
<reference key="1">
    <citation type="journal article" date="1993" name="Plant J.">
        <title>Homologs of the essential ubiquitin conjugating enzymes UBC1, 4, and 5 in yeast are encoded by a multigene family in Arabidopsis thaliana.</title>
        <authorList>
            <person name="Girod P.-A."/>
            <person name="Carpenter T.B."/>
            <person name="van Nocker S."/>
            <person name="Sullivan M.L."/>
            <person name="Vierstra R.D."/>
        </authorList>
    </citation>
    <scope>NUCLEOTIDE SEQUENCE [GENOMIC DNA]</scope>
    <source>
        <strain>cv. Columbia</strain>
        <tissue>Leaf</tissue>
    </source>
</reference>
<reference key="2">
    <citation type="journal article" date="2005" name="Plant Physiol.">
        <title>Genome analysis and functional characterization of the E2 and RING-type E3 ligase ubiquitination enzymes of Arabidopsis.</title>
        <authorList>
            <person name="Kraft E."/>
            <person name="Stone S.L."/>
            <person name="Ma L."/>
            <person name="Su N."/>
            <person name="Gao Y."/>
            <person name="Lau O.-S."/>
            <person name="Deng X.-W."/>
            <person name="Callis J."/>
        </authorList>
    </citation>
    <scope>NUCLEOTIDE SEQUENCE [MRNA] (ISOFORM 1)</scope>
    <scope>FUNCTION</scope>
    <scope>TISSUE SPECIFICITY</scope>
    <scope>GENE FAMILY</scope>
    <scope>NOMENCLATURE</scope>
</reference>
<reference key="3">
    <citation type="journal article" date="1997" name="DNA Res.">
        <title>Structural analysis of Arabidopsis thaliana chromosome 5. I. Sequence features of the 1.6 Mb regions covered by twenty physically assigned P1 clones.</title>
        <authorList>
            <person name="Sato S."/>
            <person name="Kotani H."/>
            <person name="Nakamura Y."/>
            <person name="Kaneko T."/>
            <person name="Asamizu E."/>
            <person name="Fukami M."/>
            <person name="Miyajima N."/>
            <person name="Tabata S."/>
        </authorList>
    </citation>
    <scope>NUCLEOTIDE SEQUENCE [LARGE SCALE GENOMIC DNA]</scope>
    <source>
        <strain>cv. Columbia</strain>
    </source>
</reference>
<reference key="4">
    <citation type="journal article" date="2017" name="Plant J.">
        <title>Araport11: a complete reannotation of the Arabidopsis thaliana reference genome.</title>
        <authorList>
            <person name="Cheng C.Y."/>
            <person name="Krishnakumar V."/>
            <person name="Chan A.P."/>
            <person name="Thibaud-Nissen F."/>
            <person name="Schobel S."/>
            <person name="Town C.D."/>
        </authorList>
    </citation>
    <scope>GENOME REANNOTATION</scope>
    <source>
        <strain>cv. Columbia</strain>
    </source>
</reference>
<reference key="5">
    <citation type="journal article" date="2003" name="Science">
        <title>Empirical analysis of transcriptional activity in the Arabidopsis genome.</title>
        <authorList>
            <person name="Yamada K."/>
            <person name="Lim J."/>
            <person name="Dale J.M."/>
            <person name="Chen H."/>
            <person name="Shinn P."/>
            <person name="Palm C.J."/>
            <person name="Southwick A.M."/>
            <person name="Wu H.C."/>
            <person name="Kim C.J."/>
            <person name="Nguyen M."/>
            <person name="Pham P.K."/>
            <person name="Cheuk R.F."/>
            <person name="Karlin-Newmann G."/>
            <person name="Liu S.X."/>
            <person name="Lam B."/>
            <person name="Sakano H."/>
            <person name="Wu T."/>
            <person name="Yu G."/>
            <person name="Miranda M."/>
            <person name="Quach H.L."/>
            <person name="Tripp M."/>
            <person name="Chang C.H."/>
            <person name="Lee J.M."/>
            <person name="Toriumi M.J."/>
            <person name="Chan M.M."/>
            <person name="Tang C.C."/>
            <person name="Onodera C.S."/>
            <person name="Deng J.M."/>
            <person name="Akiyama K."/>
            <person name="Ansari Y."/>
            <person name="Arakawa T."/>
            <person name="Banh J."/>
            <person name="Banno F."/>
            <person name="Bowser L."/>
            <person name="Brooks S.Y."/>
            <person name="Carninci P."/>
            <person name="Chao Q."/>
            <person name="Choy N."/>
            <person name="Enju A."/>
            <person name="Goldsmith A.D."/>
            <person name="Gurjal M."/>
            <person name="Hansen N.F."/>
            <person name="Hayashizaki Y."/>
            <person name="Johnson-Hopson C."/>
            <person name="Hsuan V.W."/>
            <person name="Iida K."/>
            <person name="Karnes M."/>
            <person name="Khan S."/>
            <person name="Koesema E."/>
            <person name="Ishida J."/>
            <person name="Jiang P.X."/>
            <person name="Jones T."/>
            <person name="Kawai J."/>
            <person name="Kamiya A."/>
            <person name="Meyers C."/>
            <person name="Nakajima M."/>
            <person name="Narusaka M."/>
            <person name="Seki M."/>
            <person name="Sakurai T."/>
            <person name="Satou M."/>
            <person name="Tamse R."/>
            <person name="Vaysberg M."/>
            <person name="Wallender E.K."/>
            <person name="Wong C."/>
            <person name="Yamamura Y."/>
            <person name="Yuan S."/>
            <person name="Shinozaki K."/>
            <person name="Davis R.W."/>
            <person name="Theologis A."/>
            <person name="Ecker J.R."/>
        </authorList>
    </citation>
    <scope>NUCLEOTIDE SEQUENCE [LARGE SCALE MRNA]</scope>
    <source>
        <strain>cv. Columbia</strain>
    </source>
</reference>
<reference key="6">
    <citation type="submission" date="2002-03" db="EMBL/GenBank/DDBJ databases">
        <title>Full-length cDNA from Arabidopsis thaliana.</title>
        <authorList>
            <person name="Brover V.V."/>
            <person name="Troukhan M.E."/>
            <person name="Alexandrov N.A."/>
            <person name="Lu Y.-P."/>
            <person name="Flavell R.B."/>
            <person name="Feldmann K.A."/>
        </authorList>
    </citation>
    <scope>NUCLEOTIDE SEQUENCE [LARGE SCALE MRNA]</scope>
</reference>
<reference key="7">
    <citation type="journal article" date="1996" name="Plant J.">
        <title>Further progress towards a catalogue of all Arabidopsis genes: analysis of a set of 5000 non-redundant ESTs.</title>
        <authorList>
            <person name="Cooke R."/>
            <person name="Raynal M."/>
            <person name="Laudie M."/>
            <person name="Grellet F."/>
            <person name="Delseny M."/>
            <person name="Morris P.-C."/>
            <person name="Guerrier D."/>
            <person name="Giraudat J."/>
            <person name="Quigley F."/>
            <person name="Clabault G."/>
            <person name="Li Y.-F."/>
            <person name="Mache R."/>
            <person name="Krivitzky M."/>
            <person name="Gy I.J.-J."/>
            <person name="Kreis M."/>
            <person name="Lecharny A."/>
            <person name="Parmentier Y."/>
            <person name="Marbach J."/>
            <person name="Fleck J."/>
            <person name="Clement B."/>
            <person name="Philipps G."/>
            <person name="Herve C."/>
            <person name="Bardet C."/>
            <person name="Tremousaygue D."/>
            <person name="Lescure B."/>
            <person name="Lacomme C."/>
            <person name="Roby D."/>
            <person name="Jourjon M.-F."/>
            <person name="Chabrier P."/>
            <person name="Charpenteau J.-L."/>
            <person name="Desprez T."/>
            <person name="Amselem J."/>
            <person name="Chiapello H."/>
            <person name="Hoefte H."/>
        </authorList>
    </citation>
    <scope>NUCLEOTIDE SEQUENCE [LARGE SCALE MRNA] OF 1-74</scope>
    <source>
        <strain>cv. Columbia</strain>
    </source>
</reference>
<reference key="8">
    <citation type="journal article" date="1993" name="Plant J.">
        <title>An inventory of 1152 expressed sequence tags obtained by partial sequencing of cDNAs from Arabidopsis thaliana.</title>
        <authorList>
            <person name="Hoefte H."/>
            <person name="Desprez T."/>
            <person name="Amselem J."/>
            <person name="Chiapello H."/>
            <person name="Rouze P."/>
            <person name="Caboche M."/>
            <person name="Moisan A."/>
            <person name="Jourjon M.-F."/>
            <person name="Charpenteau J.-L."/>
            <person name="Berthomieu P."/>
            <person name="Guerrier D."/>
            <person name="Giraudat J."/>
            <person name="Quigley F."/>
            <person name="Thomas F."/>
            <person name="Yu D.-Y."/>
            <person name="Mache R."/>
            <person name="Raynal M."/>
            <person name="Cooke R."/>
            <person name="Grellet F."/>
            <person name="Delseny M."/>
            <person name="Parmentier Y."/>
            <person name="de Marcillac G."/>
            <person name="Gigot C."/>
            <person name="Fleck J."/>
            <person name="Philipps G."/>
            <person name="Axelos M."/>
            <person name="Bardet C."/>
            <person name="Tremousaygue D."/>
            <person name="Lescure B."/>
        </authorList>
    </citation>
    <scope>NUCLEOTIDE SEQUENCE [LARGE SCALE MRNA] OF 36-148</scope>
    <source>
        <strain>cv. Columbia</strain>
        <tissue>Green siliques</tissue>
    </source>
</reference>
<reference key="9">
    <citation type="journal article" date="1994" name="Mol. Gen. Genet.">
        <title>Differential expression of several E2-type ubiquitin carrier protein genes at different developmental stages in Arabidopsis thaliana and Nicotiana sylvestris.</title>
        <authorList>
            <person name="Genschik P."/>
            <person name="Durr A."/>
            <person name="Fleck J."/>
        </authorList>
    </citation>
    <scope>DEVELOPMENTAL STAGE</scope>
    <scope>INDUCTION</scope>
</reference>
<reference key="10">
    <citation type="journal article" date="2002" name="Plant J.">
        <title>Biochemical evidence for ubiquitin ligase activity of the Arabidopsis COP1 interacting protein 8 (CIP8).</title>
        <authorList>
            <person name="Hardtke C.S."/>
            <person name="Okamoto H."/>
            <person name="Stoop-Myer C."/>
            <person name="Deng X.-W."/>
        </authorList>
    </citation>
    <scope>INTERACTION WITH CIP8</scope>
</reference>
<reference key="11">
    <citation type="journal article" date="2006" name="Plant J.">
        <title>AtCHIP functions as an E3 ubiquitin ligase of protein phosphatase 2A subunits and alters plant response to abscisic acid treatment.</title>
        <authorList>
            <person name="Luo J."/>
            <person name="Shen G."/>
            <person name="Yan J."/>
            <person name="He C."/>
            <person name="Zhang H."/>
        </authorList>
    </citation>
    <scope>INTERACTION WITH CHIP</scope>
</reference>
<reference key="12">
    <citation type="journal article" date="2006" name="Plant J.">
        <title>Upregulation of an Arabidopsis RING-H2 gene, XERICO, confers drought tolerance through increased abscisic acid biosynthesis.</title>
        <authorList>
            <person name="Ko J.-H."/>
            <person name="Yang S.H."/>
            <person name="Han K.-H."/>
        </authorList>
    </citation>
    <scope>INTERACTION WITH XERICO</scope>
</reference>
<reference key="13">
    <citation type="journal article" date="2007" name="Plant J.">
        <title>A mutation in NLA, which encodes a RING-type ubiquitin ligase, disrupts the adaptability of Arabidopsis to nitrogen limitation.</title>
        <authorList>
            <person name="Peng M."/>
            <person name="Hannam C."/>
            <person name="Gu H."/>
            <person name="Bi Y.-M."/>
            <person name="Rothstein S.J."/>
        </authorList>
    </citation>
    <scope>INTERACTION WITH NLA</scope>
</reference>
<name>UBC8_ARATH</name>
<proteinExistence type="evidence at protein level"/>
<gene>
    <name type="primary">UBC8</name>
    <name type="synonym">UBC4A</name>
    <name type="ordered locus">At5g41700</name>
    <name type="ORF">MBK23.24</name>
</gene>
<organism>
    <name type="scientific">Arabidopsis thaliana</name>
    <name type="common">Mouse-ear cress</name>
    <dbReference type="NCBI Taxonomy" id="3702"/>
    <lineage>
        <taxon>Eukaryota</taxon>
        <taxon>Viridiplantae</taxon>
        <taxon>Streptophyta</taxon>
        <taxon>Embryophyta</taxon>
        <taxon>Tracheophyta</taxon>
        <taxon>Spermatophyta</taxon>
        <taxon>Magnoliopsida</taxon>
        <taxon>eudicotyledons</taxon>
        <taxon>Gunneridae</taxon>
        <taxon>Pentapetalae</taxon>
        <taxon>rosids</taxon>
        <taxon>malvids</taxon>
        <taxon>Brassicales</taxon>
        <taxon>Brassicaceae</taxon>
        <taxon>Camelineae</taxon>
        <taxon>Arabidopsis</taxon>
    </lineage>
</organism>
<evidence type="ECO:0000255" key="1">
    <source>
        <dbReference type="PROSITE-ProRule" id="PRU00388"/>
    </source>
</evidence>
<evidence type="ECO:0000255" key="2">
    <source>
        <dbReference type="PROSITE-ProRule" id="PRU10133"/>
    </source>
</evidence>
<evidence type="ECO:0000269" key="3">
    <source>
    </source>
</evidence>
<evidence type="ECO:0000269" key="4">
    <source>
    </source>
</evidence>
<evidence type="ECO:0000269" key="5">
    <source>
    </source>
</evidence>
<evidence type="ECO:0000269" key="6">
    <source>
    </source>
</evidence>
<evidence type="ECO:0000269" key="7">
    <source>
    </source>
</evidence>
<evidence type="ECO:0000269" key="8">
    <source>
    </source>
</evidence>
<evidence type="ECO:0000305" key="9"/>
<evidence type="ECO:0007829" key="10">
    <source>
        <dbReference type="PDB" id="4X57"/>
    </source>
</evidence>
<dbReference type="EC" id="2.3.2.23"/>
<dbReference type="EMBL" id="Z14989">
    <property type="protein sequence ID" value="CAA78713.1"/>
    <property type="molecule type" value="Genomic_DNA"/>
</dbReference>
<dbReference type="EMBL" id="DQ027022">
    <property type="protein sequence ID" value="AAY44848.1"/>
    <property type="molecule type" value="mRNA"/>
</dbReference>
<dbReference type="EMBL" id="AB005233">
    <property type="protein sequence ID" value="BAB11476.1"/>
    <property type="molecule type" value="Genomic_DNA"/>
</dbReference>
<dbReference type="EMBL" id="CP002688">
    <property type="protein sequence ID" value="AED94711.1"/>
    <property type="molecule type" value="Genomic_DNA"/>
</dbReference>
<dbReference type="EMBL" id="CP002688">
    <property type="protein sequence ID" value="AED94712.1"/>
    <property type="molecule type" value="Genomic_DNA"/>
</dbReference>
<dbReference type="EMBL" id="CP002688">
    <property type="protein sequence ID" value="AED94713.1"/>
    <property type="molecule type" value="Genomic_DNA"/>
</dbReference>
<dbReference type="EMBL" id="CP002688">
    <property type="protein sequence ID" value="AED94714.1"/>
    <property type="molecule type" value="Genomic_DNA"/>
</dbReference>
<dbReference type="EMBL" id="CP002688">
    <property type="protein sequence ID" value="AED94715.1"/>
    <property type="molecule type" value="Genomic_DNA"/>
</dbReference>
<dbReference type="EMBL" id="AF325009">
    <property type="protein sequence ID" value="AAG40361.1"/>
    <property type="molecule type" value="mRNA"/>
</dbReference>
<dbReference type="EMBL" id="AY063074">
    <property type="protein sequence ID" value="AAL34248.1"/>
    <property type="molecule type" value="mRNA"/>
</dbReference>
<dbReference type="EMBL" id="AF370257">
    <property type="protein sequence ID" value="AAK44072.1"/>
    <property type="molecule type" value="mRNA"/>
</dbReference>
<dbReference type="EMBL" id="AY054595">
    <property type="protein sequence ID" value="AAK96786.1"/>
    <property type="molecule type" value="mRNA"/>
</dbReference>
<dbReference type="EMBL" id="AY057631">
    <property type="protein sequence ID" value="AAL15262.1"/>
    <property type="molecule type" value="mRNA"/>
</dbReference>
<dbReference type="EMBL" id="AY072514">
    <property type="protein sequence ID" value="AAL66929.1"/>
    <property type="molecule type" value="mRNA"/>
</dbReference>
<dbReference type="EMBL" id="AY085670">
    <property type="protein sequence ID" value="AAM62889.1"/>
    <property type="molecule type" value="mRNA"/>
</dbReference>
<dbReference type="EMBL" id="Z37225">
    <property type="protein sequence ID" value="CAA85527.1"/>
    <property type="molecule type" value="mRNA"/>
</dbReference>
<dbReference type="EMBL" id="Z17692">
    <property type="protein sequence ID" value="CAA79036.1"/>
    <property type="molecule type" value="mRNA"/>
</dbReference>
<dbReference type="RefSeq" id="NP_001190447.1">
    <molecule id="P35131-1"/>
    <property type="nucleotide sequence ID" value="NM_001203518.1"/>
</dbReference>
<dbReference type="RefSeq" id="NP_568595.2">
    <molecule id="P35131-2"/>
    <property type="nucleotide sequence ID" value="NM_123535.2"/>
</dbReference>
<dbReference type="RefSeq" id="NP_851114.1">
    <molecule id="P35131-1"/>
    <property type="nucleotide sequence ID" value="NM_180783.2"/>
</dbReference>
<dbReference type="RefSeq" id="NP_851115.1">
    <molecule id="P35131-1"/>
    <property type="nucleotide sequence ID" value="NM_180784.2"/>
</dbReference>
<dbReference type="RefSeq" id="NP_851116.1">
    <molecule id="P35131-3"/>
    <property type="nucleotide sequence ID" value="NM_180785.2"/>
</dbReference>
<dbReference type="PDB" id="4X57">
    <property type="method" value="X-ray"/>
    <property type="resolution" value="2.80 A"/>
    <property type="chains" value="A/C=1-148"/>
</dbReference>
<dbReference type="PDBsum" id="4X57"/>
<dbReference type="SMR" id="P35131"/>
<dbReference type="BioGRID" id="19424">
    <property type="interactions" value="18"/>
</dbReference>
<dbReference type="FunCoup" id="P35131">
    <property type="interactions" value="3260"/>
</dbReference>
<dbReference type="IntAct" id="P35131">
    <property type="interactions" value="2"/>
</dbReference>
<dbReference type="STRING" id="3702.P35131"/>
<dbReference type="PaxDb" id="3702-AT5G41700.4"/>
<dbReference type="ProteomicsDB" id="228602">
    <molecule id="P35131-1"/>
</dbReference>
<dbReference type="EnsemblPlants" id="AT5G41700.1">
    <molecule id="P35131-1"/>
    <property type="protein sequence ID" value="AT5G41700.1"/>
    <property type="gene ID" value="AT5G41700"/>
</dbReference>
<dbReference type="EnsemblPlants" id="AT5G41700.2">
    <molecule id="P35131-1"/>
    <property type="protein sequence ID" value="AT5G41700.2"/>
    <property type="gene ID" value="AT5G41700"/>
</dbReference>
<dbReference type="EnsemblPlants" id="AT5G41700.3">
    <molecule id="P35131-3"/>
    <property type="protein sequence ID" value="AT5G41700.3"/>
    <property type="gene ID" value="AT5G41700"/>
</dbReference>
<dbReference type="EnsemblPlants" id="AT5G41700.4">
    <molecule id="P35131-2"/>
    <property type="protein sequence ID" value="AT5G41700.4"/>
    <property type="gene ID" value="AT5G41700"/>
</dbReference>
<dbReference type="EnsemblPlants" id="AT5G41700.5">
    <molecule id="P35131-1"/>
    <property type="protein sequence ID" value="AT5G41700.5"/>
    <property type="gene ID" value="AT5G41700"/>
</dbReference>
<dbReference type="GeneID" id="834173"/>
<dbReference type="Gramene" id="AT5G41700.1">
    <molecule id="P35131-1"/>
    <property type="protein sequence ID" value="AT5G41700.1"/>
    <property type="gene ID" value="AT5G41700"/>
</dbReference>
<dbReference type="Gramene" id="AT5G41700.2">
    <molecule id="P35131-1"/>
    <property type="protein sequence ID" value="AT5G41700.2"/>
    <property type="gene ID" value="AT5G41700"/>
</dbReference>
<dbReference type="Gramene" id="AT5G41700.3">
    <molecule id="P35131-3"/>
    <property type="protein sequence ID" value="AT5G41700.3"/>
    <property type="gene ID" value="AT5G41700"/>
</dbReference>
<dbReference type="Gramene" id="AT5G41700.4">
    <molecule id="P35131-2"/>
    <property type="protein sequence ID" value="AT5G41700.4"/>
    <property type="gene ID" value="AT5G41700"/>
</dbReference>
<dbReference type="Gramene" id="AT5G41700.5">
    <molecule id="P35131-1"/>
    <property type="protein sequence ID" value="AT5G41700.5"/>
    <property type="gene ID" value="AT5G41700"/>
</dbReference>
<dbReference type="KEGG" id="ath:AT5G41700"/>
<dbReference type="Araport" id="AT5G41700"/>
<dbReference type="TAIR" id="AT5G41700">
    <property type="gene designation" value="UBC8"/>
</dbReference>
<dbReference type="eggNOG" id="KOG0417">
    <property type="taxonomic scope" value="Eukaryota"/>
</dbReference>
<dbReference type="HOGENOM" id="CLU_030988_13_3_1"/>
<dbReference type="InParanoid" id="P35131"/>
<dbReference type="OMA" id="VEACYLI"/>
<dbReference type="PhylomeDB" id="P35131"/>
<dbReference type="UniPathway" id="UPA00143"/>
<dbReference type="EvolutionaryTrace" id="P35131"/>
<dbReference type="PRO" id="PR:P35131"/>
<dbReference type="Proteomes" id="UP000006548">
    <property type="component" value="Chromosome 5"/>
</dbReference>
<dbReference type="ExpressionAtlas" id="P35131">
    <property type="expression patterns" value="baseline and differential"/>
</dbReference>
<dbReference type="GO" id="GO:0005737">
    <property type="term" value="C:cytoplasm"/>
    <property type="evidence" value="ECO:0000314"/>
    <property type="project" value="TAIR"/>
</dbReference>
<dbReference type="GO" id="GO:0005634">
    <property type="term" value="C:nucleus"/>
    <property type="evidence" value="ECO:0000314"/>
    <property type="project" value="TAIR"/>
</dbReference>
<dbReference type="GO" id="GO:0005524">
    <property type="term" value="F:ATP binding"/>
    <property type="evidence" value="ECO:0007669"/>
    <property type="project" value="UniProtKB-KW"/>
</dbReference>
<dbReference type="GO" id="GO:0061631">
    <property type="term" value="F:ubiquitin conjugating enzyme activity"/>
    <property type="evidence" value="ECO:0007669"/>
    <property type="project" value="UniProtKB-EC"/>
</dbReference>
<dbReference type="GO" id="GO:0004842">
    <property type="term" value="F:ubiquitin-protein transferase activity"/>
    <property type="evidence" value="ECO:0000314"/>
    <property type="project" value="TAIR"/>
</dbReference>
<dbReference type="GO" id="GO:0009960">
    <property type="term" value="P:endosperm development"/>
    <property type="evidence" value="ECO:0000270"/>
    <property type="project" value="TAIR"/>
</dbReference>
<dbReference type="GO" id="GO:0016567">
    <property type="term" value="P:protein ubiquitination"/>
    <property type="evidence" value="ECO:0007669"/>
    <property type="project" value="UniProtKB-UniPathway"/>
</dbReference>
<dbReference type="GO" id="GO:0006511">
    <property type="term" value="P:ubiquitin-dependent protein catabolic process"/>
    <property type="evidence" value="ECO:0000314"/>
    <property type="project" value="TAIR"/>
</dbReference>
<dbReference type="CDD" id="cd23792">
    <property type="entry name" value="UBCc_UBE2D"/>
    <property type="match status" value="1"/>
</dbReference>
<dbReference type="FunFam" id="3.10.110.10:FF:000001">
    <property type="entry name" value="Ubiquitin-conjugating enzyme 28, E2"/>
    <property type="match status" value="1"/>
</dbReference>
<dbReference type="Gene3D" id="3.10.110.10">
    <property type="entry name" value="Ubiquitin Conjugating Enzyme"/>
    <property type="match status" value="1"/>
</dbReference>
<dbReference type="InterPro" id="IPR000608">
    <property type="entry name" value="UBQ-conjugat_E2_core"/>
</dbReference>
<dbReference type="InterPro" id="IPR023313">
    <property type="entry name" value="UBQ-conjugating_AS"/>
</dbReference>
<dbReference type="InterPro" id="IPR016135">
    <property type="entry name" value="UBQ-conjugating_enzyme/RWD"/>
</dbReference>
<dbReference type="PANTHER" id="PTHR24068">
    <property type="entry name" value="UBIQUITIN-CONJUGATING ENZYME E2"/>
    <property type="match status" value="1"/>
</dbReference>
<dbReference type="Pfam" id="PF00179">
    <property type="entry name" value="UQ_con"/>
    <property type="match status" value="1"/>
</dbReference>
<dbReference type="SMART" id="SM00212">
    <property type="entry name" value="UBCc"/>
    <property type="match status" value="1"/>
</dbReference>
<dbReference type="SUPFAM" id="SSF54495">
    <property type="entry name" value="UBC-like"/>
    <property type="match status" value="1"/>
</dbReference>
<dbReference type="PROSITE" id="PS00183">
    <property type="entry name" value="UBC_1"/>
    <property type="match status" value="1"/>
</dbReference>
<dbReference type="PROSITE" id="PS50127">
    <property type="entry name" value="UBC_2"/>
    <property type="match status" value="1"/>
</dbReference>